<reference key="1">
    <citation type="journal article" date="1998" name="Infect. Immun.">
        <title>Enteric beta-defensin: molecular cloning and characterization of a gene with inducible intestinal epithelial cell expression associated with Cryptosporidium parvum infection.</title>
        <authorList>
            <person name="Tarver A.P."/>
            <person name="Clark D.P."/>
            <person name="Diamond G."/>
            <person name="Russell J.P."/>
            <person name="Erdjument-Bromage H."/>
            <person name="Tempst P."/>
            <person name="Cohen K.S."/>
            <person name="Jones D.E."/>
            <person name="Sweeney R.W."/>
            <person name="Wines M."/>
            <person name="Hwang S."/>
            <person name="Bevins C.L."/>
        </authorList>
    </citation>
    <scope>NUCLEOTIDE SEQUENCE [GENOMIC DNA]</scope>
    <source>
        <tissue>Small intestine</tissue>
    </source>
</reference>
<reference key="2">
    <citation type="journal article" date="1993" name="J. Biol. Chem.">
        <title>Purification, primary structures, and antibacterial activities of beta-defensins, a new family of antimicrobial peptides from bovine neutrophils.</title>
        <authorList>
            <person name="Selsted M.E."/>
            <person name="Tang Y.-Q."/>
            <person name="Morris W.L."/>
            <person name="McGuire P.A."/>
            <person name="Novotny M.J."/>
            <person name="Smith W."/>
            <person name="Henschen A.H."/>
            <person name="Cullor J.S."/>
        </authorList>
    </citation>
    <scope>PROTEIN SEQUENCE OF 16-57</scope>
    <scope>PYROGLUTAMATE FORMATION AT GLN-16</scope>
    <source>
        <strain>Hereford</strain>
        <tissue>Neutrophil</tissue>
    </source>
</reference>
<dbReference type="EMBL" id="AF016396">
    <property type="protein sequence ID" value="AAC48803.1"/>
    <property type="molecule type" value="Genomic_DNA"/>
</dbReference>
<dbReference type="SMR" id="P46161"/>
<dbReference type="FunCoup" id="P46161">
    <property type="interactions" value="28"/>
</dbReference>
<dbReference type="PaxDb" id="9913-ENSBTAP00000022881"/>
<dbReference type="InParanoid" id="P46161"/>
<dbReference type="Proteomes" id="UP000009136">
    <property type="component" value="Unplaced"/>
</dbReference>
<dbReference type="GO" id="GO:0005615">
    <property type="term" value="C:extracellular space"/>
    <property type="evidence" value="ECO:0000318"/>
    <property type="project" value="GO_Central"/>
</dbReference>
<dbReference type="GO" id="GO:0031731">
    <property type="term" value="F:CCR6 chemokine receptor binding"/>
    <property type="evidence" value="ECO:0000318"/>
    <property type="project" value="GO_Central"/>
</dbReference>
<dbReference type="GO" id="GO:0042056">
    <property type="term" value="F:chemoattractant activity"/>
    <property type="evidence" value="ECO:0000318"/>
    <property type="project" value="GO_Central"/>
</dbReference>
<dbReference type="GO" id="GO:0060326">
    <property type="term" value="P:cell chemotaxis"/>
    <property type="evidence" value="ECO:0000318"/>
    <property type="project" value="GO_Central"/>
</dbReference>
<dbReference type="GO" id="GO:0042742">
    <property type="term" value="P:defense response to bacterium"/>
    <property type="evidence" value="ECO:0000318"/>
    <property type="project" value="GO_Central"/>
</dbReference>
<dbReference type="FunFam" id="3.10.360.10:FF:000001">
    <property type="entry name" value="Beta-defensin 1"/>
    <property type="match status" value="1"/>
</dbReference>
<dbReference type="Gene3D" id="3.10.360.10">
    <property type="entry name" value="Antimicrobial Peptide, Beta-defensin 2, Chain A"/>
    <property type="match status" value="1"/>
</dbReference>
<dbReference type="InterPro" id="IPR006080">
    <property type="entry name" value="Beta/alpha-defensin_C"/>
</dbReference>
<dbReference type="InterPro" id="IPR001855">
    <property type="entry name" value="Defensin_beta-like"/>
</dbReference>
<dbReference type="PANTHER" id="PTHR20515">
    <property type="entry name" value="BETA-DEFENSIN"/>
    <property type="match status" value="1"/>
</dbReference>
<dbReference type="PANTHER" id="PTHR20515:SF2">
    <property type="entry name" value="DEFENSIN BETA 4A"/>
    <property type="match status" value="1"/>
</dbReference>
<dbReference type="Pfam" id="PF00711">
    <property type="entry name" value="Defensin_beta"/>
    <property type="match status" value="1"/>
</dbReference>
<dbReference type="SMART" id="SM00048">
    <property type="entry name" value="DEFSN"/>
    <property type="match status" value="1"/>
</dbReference>
<dbReference type="SUPFAM" id="SSF57392">
    <property type="entry name" value="Defensin-like"/>
    <property type="match status" value="1"/>
</dbReference>
<protein>
    <recommendedName>
        <fullName>Beta-defensin 3</fullName>
    </recommendedName>
    <alternativeName>
        <fullName>BNBD-3</fullName>
    </alternativeName>
    <alternativeName>
        <fullName>BNDB-3</fullName>
    </alternativeName>
</protein>
<keyword id="KW-0044">Antibiotic</keyword>
<keyword id="KW-0929">Antimicrobial</keyword>
<keyword id="KW-0211">Defensin</keyword>
<keyword id="KW-0903">Direct protein sequencing</keyword>
<keyword id="KW-1015">Disulfide bond</keyword>
<keyword id="KW-0873">Pyrrolidone carboxylic acid</keyword>
<keyword id="KW-1185">Reference proteome</keyword>
<keyword id="KW-0964">Secreted</keyword>
<keyword id="KW-0732">Signal</keyword>
<evidence type="ECO:0000250" key="1"/>
<evidence type="ECO:0000255" key="2"/>
<evidence type="ECO:0000269" key="3">
    <source>
    </source>
</evidence>
<evidence type="ECO:0000305" key="4"/>
<sequence>LALLFLVLSAGSGFTQGVRNHVTCRINRGFCVPIRCPGRTRQIGTCFGPRIKCCRSW</sequence>
<feature type="signal peptide" evidence="2">
    <location>
        <begin position="1" status="less than"/>
        <end status="unknown"/>
    </location>
</feature>
<feature type="propeptide" id="PRO_0000006880" evidence="2">
    <location>
        <begin status="unknown"/>
        <end position="15"/>
    </location>
</feature>
<feature type="peptide" id="PRO_0000006881" description="Beta-defensin 3">
    <location>
        <begin position="16"/>
        <end position="57"/>
    </location>
</feature>
<feature type="modified residue" description="Pyrrolidone carboxylic acid" evidence="3">
    <location>
        <position position="16"/>
    </location>
</feature>
<feature type="disulfide bond" evidence="1">
    <location>
        <begin position="24"/>
        <end position="53"/>
    </location>
</feature>
<feature type="disulfide bond" evidence="1">
    <location>
        <begin position="31"/>
        <end position="46"/>
    </location>
</feature>
<feature type="disulfide bond" evidence="1">
    <location>
        <begin position="36"/>
        <end position="54"/>
    </location>
</feature>
<feature type="non-terminal residue">
    <location>
        <position position="1"/>
    </location>
</feature>
<accession>P46161</accession>
<gene>
    <name type="primary">DEFB3</name>
    <name type="synonym">BNDB3</name>
</gene>
<comment type="function">
    <text>Has bactericidal activity. Active against E.coli ML35 and S.aureus 502A.</text>
</comment>
<comment type="subcellular location">
    <subcellularLocation>
        <location>Secreted</location>
    </subcellularLocation>
</comment>
<comment type="tissue specificity">
    <text>Neutrophilic granules.</text>
</comment>
<comment type="similarity">
    <text evidence="4">Belongs to the beta-defensin family.</text>
</comment>
<organism>
    <name type="scientific">Bos taurus</name>
    <name type="common">Bovine</name>
    <dbReference type="NCBI Taxonomy" id="9913"/>
    <lineage>
        <taxon>Eukaryota</taxon>
        <taxon>Metazoa</taxon>
        <taxon>Chordata</taxon>
        <taxon>Craniata</taxon>
        <taxon>Vertebrata</taxon>
        <taxon>Euteleostomi</taxon>
        <taxon>Mammalia</taxon>
        <taxon>Eutheria</taxon>
        <taxon>Laurasiatheria</taxon>
        <taxon>Artiodactyla</taxon>
        <taxon>Ruminantia</taxon>
        <taxon>Pecora</taxon>
        <taxon>Bovidae</taxon>
        <taxon>Bovinae</taxon>
        <taxon>Bos</taxon>
    </lineage>
</organism>
<proteinExistence type="evidence at protein level"/>
<name>DEFB3_BOVIN</name>